<evidence type="ECO:0000255" key="1">
    <source>
        <dbReference type="HAMAP-Rule" id="MF_01014"/>
    </source>
</evidence>
<reference key="1">
    <citation type="journal article" date="2009" name="Appl. Environ. Microbiol.">
        <title>Rhizobium sp. strain NGR234 possesses a remarkable number of secretion systems.</title>
        <authorList>
            <person name="Schmeisser C."/>
            <person name="Liesegang H."/>
            <person name="Krysciak D."/>
            <person name="Bakkou N."/>
            <person name="Le Quere A."/>
            <person name="Wollherr A."/>
            <person name="Heinemeyer I."/>
            <person name="Morgenstern B."/>
            <person name="Pommerening-Roeser A."/>
            <person name="Flores M."/>
            <person name="Palacios R."/>
            <person name="Brenner S."/>
            <person name="Gottschalk G."/>
            <person name="Schmitz R.A."/>
            <person name="Broughton W.J."/>
            <person name="Perret X."/>
            <person name="Strittmatter A.W."/>
            <person name="Streit W.R."/>
        </authorList>
    </citation>
    <scope>NUCLEOTIDE SEQUENCE [LARGE SCALE GENOMIC DNA]</scope>
    <source>
        <strain>NBRC 101917 / NGR234</strain>
    </source>
</reference>
<name>HIS4_SINFN</name>
<proteinExistence type="inferred from homology"/>
<gene>
    <name evidence="1" type="primary">hisA</name>
    <name type="ordered locus">NGR_c34010</name>
</gene>
<organism>
    <name type="scientific">Sinorhizobium fredii (strain NBRC 101917 / NGR234)</name>
    <dbReference type="NCBI Taxonomy" id="394"/>
    <lineage>
        <taxon>Bacteria</taxon>
        <taxon>Pseudomonadati</taxon>
        <taxon>Pseudomonadota</taxon>
        <taxon>Alphaproteobacteria</taxon>
        <taxon>Hyphomicrobiales</taxon>
        <taxon>Rhizobiaceae</taxon>
        <taxon>Sinorhizobium/Ensifer group</taxon>
        <taxon>Sinorhizobium</taxon>
    </lineage>
</organism>
<sequence length="245" mass="25646">MILFPAIDLKDGQCVRLKLGDMDQATVYNPDPAAQARAFEEQGFEWLHVVDLNGAFAGETVNGAAVDAILKATGNPVQLGGGIRTLEHIENWLSHGLARVILGTVAVRDPALVIEACGKFPGRVAVGIDAKGGKVAVEGWAEASELGVIELAKKFEGAGVSAIIYTDIDRDGILTGINWDSTLELANAVSIPVIASGGLASMDDIRRLAAPDAAKLEGAISGRALYDGRIDPKEALALIRAARKA</sequence>
<accession>C3MBC2</accession>
<comment type="catalytic activity">
    <reaction evidence="1">
        <text>1-(5-phospho-beta-D-ribosyl)-5-[(5-phospho-beta-D-ribosylamino)methylideneamino]imidazole-4-carboxamide = 5-[(5-phospho-1-deoxy-D-ribulos-1-ylimino)methylamino]-1-(5-phospho-beta-D-ribosyl)imidazole-4-carboxamide</text>
        <dbReference type="Rhea" id="RHEA:15469"/>
        <dbReference type="ChEBI" id="CHEBI:58435"/>
        <dbReference type="ChEBI" id="CHEBI:58525"/>
        <dbReference type="EC" id="5.3.1.16"/>
    </reaction>
</comment>
<comment type="pathway">
    <text evidence="1">Amino-acid biosynthesis; L-histidine biosynthesis; L-histidine from 5-phospho-alpha-D-ribose 1-diphosphate: step 4/9.</text>
</comment>
<comment type="subcellular location">
    <subcellularLocation>
        <location evidence="1">Cytoplasm</location>
    </subcellularLocation>
</comment>
<comment type="similarity">
    <text evidence="1">Belongs to the HisA/HisF family.</text>
</comment>
<protein>
    <recommendedName>
        <fullName evidence="1">1-(5-phosphoribosyl)-5-[(5-phosphoribosylamino)methylideneamino] imidazole-4-carboxamide isomerase</fullName>
        <ecNumber evidence="1">5.3.1.16</ecNumber>
    </recommendedName>
    <alternativeName>
        <fullName evidence="1">Phosphoribosylformimino-5-aminoimidazole carboxamide ribotide isomerase</fullName>
    </alternativeName>
</protein>
<keyword id="KW-0028">Amino-acid biosynthesis</keyword>
<keyword id="KW-0963">Cytoplasm</keyword>
<keyword id="KW-0368">Histidine biosynthesis</keyword>
<keyword id="KW-0413">Isomerase</keyword>
<keyword id="KW-1185">Reference proteome</keyword>
<dbReference type="EC" id="5.3.1.16" evidence="1"/>
<dbReference type="EMBL" id="CP001389">
    <property type="protein sequence ID" value="ACP27131.1"/>
    <property type="molecule type" value="Genomic_DNA"/>
</dbReference>
<dbReference type="RefSeq" id="WP_012709878.1">
    <property type="nucleotide sequence ID" value="NC_012587.1"/>
</dbReference>
<dbReference type="RefSeq" id="YP_002827884.1">
    <property type="nucleotide sequence ID" value="NC_012587.1"/>
</dbReference>
<dbReference type="SMR" id="C3MBC2"/>
<dbReference type="STRING" id="394.NGR_c34010"/>
<dbReference type="KEGG" id="rhi:NGR_c34010"/>
<dbReference type="PATRIC" id="fig|394.7.peg.6250"/>
<dbReference type="eggNOG" id="COG0106">
    <property type="taxonomic scope" value="Bacteria"/>
</dbReference>
<dbReference type="HOGENOM" id="CLU_048577_1_1_5"/>
<dbReference type="OrthoDB" id="9807749at2"/>
<dbReference type="UniPathway" id="UPA00031">
    <property type="reaction ID" value="UER00009"/>
</dbReference>
<dbReference type="Proteomes" id="UP000001054">
    <property type="component" value="Chromosome"/>
</dbReference>
<dbReference type="GO" id="GO:0005737">
    <property type="term" value="C:cytoplasm"/>
    <property type="evidence" value="ECO:0007669"/>
    <property type="project" value="UniProtKB-SubCell"/>
</dbReference>
<dbReference type="GO" id="GO:0003949">
    <property type="term" value="F:1-(5-phosphoribosyl)-5-[(5-phosphoribosylamino)methylideneamino]imidazole-4-carboxamide isomerase activity"/>
    <property type="evidence" value="ECO:0007669"/>
    <property type="project" value="UniProtKB-UniRule"/>
</dbReference>
<dbReference type="GO" id="GO:0000105">
    <property type="term" value="P:L-histidine biosynthetic process"/>
    <property type="evidence" value="ECO:0007669"/>
    <property type="project" value="UniProtKB-UniRule"/>
</dbReference>
<dbReference type="GO" id="GO:0000162">
    <property type="term" value="P:L-tryptophan biosynthetic process"/>
    <property type="evidence" value="ECO:0007669"/>
    <property type="project" value="TreeGrafter"/>
</dbReference>
<dbReference type="CDD" id="cd04732">
    <property type="entry name" value="HisA"/>
    <property type="match status" value="1"/>
</dbReference>
<dbReference type="FunFam" id="3.20.20.70:FF:000009">
    <property type="entry name" value="1-(5-phosphoribosyl)-5-[(5-phosphoribosylamino)methylideneamino] imidazole-4-carboxamide isomerase"/>
    <property type="match status" value="1"/>
</dbReference>
<dbReference type="Gene3D" id="3.20.20.70">
    <property type="entry name" value="Aldolase class I"/>
    <property type="match status" value="1"/>
</dbReference>
<dbReference type="HAMAP" id="MF_01014">
    <property type="entry name" value="HisA"/>
    <property type="match status" value="1"/>
</dbReference>
<dbReference type="InterPro" id="IPR013785">
    <property type="entry name" value="Aldolase_TIM"/>
</dbReference>
<dbReference type="InterPro" id="IPR006062">
    <property type="entry name" value="His_biosynth"/>
</dbReference>
<dbReference type="InterPro" id="IPR006063">
    <property type="entry name" value="HisA_bact_arch"/>
</dbReference>
<dbReference type="InterPro" id="IPR044524">
    <property type="entry name" value="Isoase_HisA-like"/>
</dbReference>
<dbReference type="InterPro" id="IPR023016">
    <property type="entry name" value="Isoase_HisA-like_bact"/>
</dbReference>
<dbReference type="InterPro" id="IPR011060">
    <property type="entry name" value="RibuloseP-bd_barrel"/>
</dbReference>
<dbReference type="NCBIfam" id="TIGR00007">
    <property type="entry name" value="1-(5-phosphoribosyl)-5-[(5-phosphoribosylamino)methylideneamino]imidazole-4-carboxamide isomerase"/>
    <property type="match status" value="1"/>
</dbReference>
<dbReference type="PANTHER" id="PTHR43090">
    <property type="entry name" value="1-(5-PHOSPHORIBOSYL)-5-[(5-PHOSPHORIBOSYLAMINO)METHYLIDENEAMINO] IMIDAZOLE-4-CARBOXAMIDE ISOMERASE"/>
    <property type="match status" value="1"/>
</dbReference>
<dbReference type="PANTHER" id="PTHR43090:SF2">
    <property type="entry name" value="1-(5-PHOSPHORIBOSYL)-5-[(5-PHOSPHORIBOSYLAMINO)METHYLIDENEAMINO] IMIDAZOLE-4-CARBOXAMIDE ISOMERASE"/>
    <property type="match status" value="1"/>
</dbReference>
<dbReference type="Pfam" id="PF00977">
    <property type="entry name" value="His_biosynth"/>
    <property type="match status" value="1"/>
</dbReference>
<dbReference type="SUPFAM" id="SSF51366">
    <property type="entry name" value="Ribulose-phoshate binding barrel"/>
    <property type="match status" value="1"/>
</dbReference>
<feature type="chain" id="PRO_1000148983" description="1-(5-phosphoribosyl)-5-[(5-phosphoribosylamino)methylideneamino] imidazole-4-carboxamide isomerase">
    <location>
        <begin position="1"/>
        <end position="245"/>
    </location>
</feature>
<feature type="active site" description="Proton acceptor" evidence="1">
    <location>
        <position position="8"/>
    </location>
</feature>
<feature type="active site" description="Proton donor" evidence="1">
    <location>
        <position position="129"/>
    </location>
</feature>